<gene>
    <name evidence="1" type="primary">pyrB</name>
    <name type="ordered locus">EcSMS35_4726</name>
</gene>
<evidence type="ECO:0000255" key="1">
    <source>
        <dbReference type="HAMAP-Rule" id="MF_00001"/>
    </source>
</evidence>
<sequence length="311" mass="34427">MANPLYQKHIISINDLSRDDLNLVLATAAKLKANPQPELLKHKVIASCFFEASTRTRLSFETSMHRLGASVVGFSDSANTSLGKKGETLADTISVISTYVDAIVMRHPQEGAARLATEFSGNVPVLNAGDGSNQHPTQTLLDLFTIQETQGRLDNLHVAMVGDLKYGRTVHSLTQALAKFDGNRFYFIAPDALAMPQYILDMLDEKGIAWSLHSSIEEVMAEVDILYMTRVQKERLDPSEYANVKAQFVLRASDLHNAKANMKVLHPLPRVDEIATDVDKTPHAWYFQQAGNGIFARQALLALVLNRDLVL</sequence>
<comment type="function">
    <text evidence="1">Catalyzes the condensation of carbamoyl phosphate and aspartate to form carbamoyl aspartate and inorganic phosphate, the committed step in the de novo pyrimidine nucleotide biosynthesis pathway.</text>
</comment>
<comment type="catalytic activity">
    <reaction evidence="1">
        <text>carbamoyl phosphate + L-aspartate = N-carbamoyl-L-aspartate + phosphate + H(+)</text>
        <dbReference type="Rhea" id="RHEA:20013"/>
        <dbReference type="ChEBI" id="CHEBI:15378"/>
        <dbReference type="ChEBI" id="CHEBI:29991"/>
        <dbReference type="ChEBI" id="CHEBI:32814"/>
        <dbReference type="ChEBI" id="CHEBI:43474"/>
        <dbReference type="ChEBI" id="CHEBI:58228"/>
        <dbReference type="EC" id="2.1.3.2"/>
    </reaction>
</comment>
<comment type="pathway">
    <text evidence="1">Pyrimidine metabolism; UMP biosynthesis via de novo pathway; (S)-dihydroorotate from bicarbonate: step 2/3.</text>
</comment>
<comment type="subunit">
    <text evidence="1">Heterododecamer (2C3:3R2) of six catalytic PyrB chains organized as two trimers (C3), and six regulatory PyrI chains organized as three dimers (R2).</text>
</comment>
<comment type="similarity">
    <text evidence="1">Belongs to the aspartate/ornithine carbamoyltransferase superfamily. ATCase family.</text>
</comment>
<feature type="chain" id="PRO_1000191904" description="Aspartate carbamoyltransferase catalytic subunit">
    <location>
        <begin position="1"/>
        <end position="311"/>
    </location>
</feature>
<feature type="binding site" evidence="1">
    <location>
        <position position="55"/>
    </location>
    <ligand>
        <name>carbamoyl phosphate</name>
        <dbReference type="ChEBI" id="CHEBI:58228"/>
    </ligand>
</feature>
<feature type="binding site" evidence="1">
    <location>
        <position position="56"/>
    </location>
    <ligand>
        <name>carbamoyl phosphate</name>
        <dbReference type="ChEBI" id="CHEBI:58228"/>
    </ligand>
</feature>
<feature type="binding site" evidence="1">
    <location>
        <position position="85"/>
    </location>
    <ligand>
        <name>L-aspartate</name>
        <dbReference type="ChEBI" id="CHEBI:29991"/>
    </ligand>
</feature>
<feature type="binding site" evidence="1">
    <location>
        <position position="106"/>
    </location>
    <ligand>
        <name>carbamoyl phosphate</name>
        <dbReference type="ChEBI" id="CHEBI:58228"/>
    </ligand>
</feature>
<feature type="binding site" evidence="1">
    <location>
        <position position="135"/>
    </location>
    <ligand>
        <name>carbamoyl phosphate</name>
        <dbReference type="ChEBI" id="CHEBI:58228"/>
    </ligand>
</feature>
<feature type="binding site" evidence="1">
    <location>
        <position position="138"/>
    </location>
    <ligand>
        <name>carbamoyl phosphate</name>
        <dbReference type="ChEBI" id="CHEBI:58228"/>
    </ligand>
</feature>
<feature type="binding site" evidence="1">
    <location>
        <position position="168"/>
    </location>
    <ligand>
        <name>L-aspartate</name>
        <dbReference type="ChEBI" id="CHEBI:29991"/>
    </ligand>
</feature>
<feature type="binding site" evidence="1">
    <location>
        <position position="230"/>
    </location>
    <ligand>
        <name>L-aspartate</name>
        <dbReference type="ChEBI" id="CHEBI:29991"/>
    </ligand>
</feature>
<feature type="binding site" evidence="1">
    <location>
        <position position="268"/>
    </location>
    <ligand>
        <name>carbamoyl phosphate</name>
        <dbReference type="ChEBI" id="CHEBI:58228"/>
    </ligand>
</feature>
<feature type="binding site" evidence="1">
    <location>
        <position position="269"/>
    </location>
    <ligand>
        <name>carbamoyl phosphate</name>
        <dbReference type="ChEBI" id="CHEBI:58228"/>
    </ligand>
</feature>
<reference key="1">
    <citation type="journal article" date="2008" name="J. Bacteriol.">
        <title>Insights into the environmental resistance gene pool from the genome sequence of the multidrug-resistant environmental isolate Escherichia coli SMS-3-5.</title>
        <authorList>
            <person name="Fricke W.F."/>
            <person name="Wright M.S."/>
            <person name="Lindell A.H."/>
            <person name="Harkins D.M."/>
            <person name="Baker-Austin C."/>
            <person name="Ravel J."/>
            <person name="Stepanauskas R."/>
        </authorList>
    </citation>
    <scope>NUCLEOTIDE SEQUENCE [LARGE SCALE GENOMIC DNA]</scope>
    <source>
        <strain>SMS-3-5 / SECEC</strain>
    </source>
</reference>
<keyword id="KW-0665">Pyrimidine biosynthesis</keyword>
<keyword id="KW-0808">Transferase</keyword>
<proteinExistence type="inferred from homology"/>
<name>PYRB_ECOSM</name>
<protein>
    <recommendedName>
        <fullName evidence="1">Aspartate carbamoyltransferase catalytic subunit</fullName>
        <ecNumber evidence="1">2.1.3.2</ecNumber>
    </recommendedName>
    <alternativeName>
        <fullName evidence="1">Aspartate transcarbamylase</fullName>
        <shortName evidence="1">ATCase</shortName>
    </alternativeName>
</protein>
<accession>B1LRD2</accession>
<dbReference type="EC" id="2.1.3.2" evidence="1"/>
<dbReference type="EMBL" id="CP000970">
    <property type="protein sequence ID" value="ACB16835.1"/>
    <property type="molecule type" value="Genomic_DNA"/>
</dbReference>
<dbReference type="RefSeq" id="WP_000013046.1">
    <property type="nucleotide sequence ID" value="NC_010498.1"/>
</dbReference>
<dbReference type="BMRB" id="B1LRD2"/>
<dbReference type="SMR" id="B1LRD2"/>
<dbReference type="GeneID" id="93777579"/>
<dbReference type="KEGG" id="ecm:EcSMS35_4726"/>
<dbReference type="HOGENOM" id="CLU_043846_1_2_6"/>
<dbReference type="UniPathway" id="UPA00070">
    <property type="reaction ID" value="UER00116"/>
</dbReference>
<dbReference type="Proteomes" id="UP000007011">
    <property type="component" value="Chromosome"/>
</dbReference>
<dbReference type="GO" id="GO:0005829">
    <property type="term" value="C:cytosol"/>
    <property type="evidence" value="ECO:0007669"/>
    <property type="project" value="TreeGrafter"/>
</dbReference>
<dbReference type="GO" id="GO:0016597">
    <property type="term" value="F:amino acid binding"/>
    <property type="evidence" value="ECO:0007669"/>
    <property type="project" value="InterPro"/>
</dbReference>
<dbReference type="GO" id="GO:0004070">
    <property type="term" value="F:aspartate carbamoyltransferase activity"/>
    <property type="evidence" value="ECO:0007669"/>
    <property type="project" value="UniProtKB-UniRule"/>
</dbReference>
<dbReference type="GO" id="GO:0006207">
    <property type="term" value="P:'de novo' pyrimidine nucleobase biosynthetic process"/>
    <property type="evidence" value="ECO:0007669"/>
    <property type="project" value="InterPro"/>
</dbReference>
<dbReference type="GO" id="GO:0044205">
    <property type="term" value="P:'de novo' UMP biosynthetic process"/>
    <property type="evidence" value="ECO:0007669"/>
    <property type="project" value="UniProtKB-UniRule"/>
</dbReference>
<dbReference type="GO" id="GO:0006520">
    <property type="term" value="P:amino acid metabolic process"/>
    <property type="evidence" value="ECO:0007669"/>
    <property type="project" value="InterPro"/>
</dbReference>
<dbReference type="FunFam" id="3.40.50.1370:FF:000001">
    <property type="entry name" value="Aspartate carbamoyltransferase"/>
    <property type="match status" value="1"/>
</dbReference>
<dbReference type="FunFam" id="3.40.50.1370:FF:000002">
    <property type="entry name" value="Aspartate carbamoyltransferase 2"/>
    <property type="match status" value="1"/>
</dbReference>
<dbReference type="Gene3D" id="3.40.50.1370">
    <property type="entry name" value="Aspartate/ornithine carbamoyltransferase"/>
    <property type="match status" value="2"/>
</dbReference>
<dbReference type="HAMAP" id="MF_00001">
    <property type="entry name" value="Asp_carb_tr"/>
    <property type="match status" value="1"/>
</dbReference>
<dbReference type="InterPro" id="IPR006132">
    <property type="entry name" value="Asp/Orn_carbamoyltranf_P-bd"/>
</dbReference>
<dbReference type="InterPro" id="IPR006130">
    <property type="entry name" value="Asp/Orn_carbamoylTrfase"/>
</dbReference>
<dbReference type="InterPro" id="IPR036901">
    <property type="entry name" value="Asp/Orn_carbamoylTrfase_sf"/>
</dbReference>
<dbReference type="InterPro" id="IPR002082">
    <property type="entry name" value="Asp_carbamoyltransf"/>
</dbReference>
<dbReference type="InterPro" id="IPR006131">
    <property type="entry name" value="Asp_carbamoyltransf_Asp/Orn-bd"/>
</dbReference>
<dbReference type="NCBIfam" id="TIGR00670">
    <property type="entry name" value="asp_carb_tr"/>
    <property type="match status" value="1"/>
</dbReference>
<dbReference type="NCBIfam" id="NF002032">
    <property type="entry name" value="PRK00856.1"/>
    <property type="match status" value="1"/>
</dbReference>
<dbReference type="PANTHER" id="PTHR45753:SF6">
    <property type="entry name" value="ASPARTATE CARBAMOYLTRANSFERASE"/>
    <property type="match status" value="1"/>
</dbReference>
<dbReference type="PANTHER" id="PTHR45753">
    <property type="entry name" value="ORNITHINE CARBAMOYLTRANSFERASE, MITOCHONDRIAL"/>
    <property type="match status" value="1"/>
</dbReference>
<dbReference type="Pfam" id="PF00185">
    <property type="entry name" value="OTCace"/>
    <property type="match status" value="1"/>
</dbReference>
<dbReference type="Pfam" id="PF02729">
    <property type="entry name" value="OTCace_N"/>
    <property type="match status" value="1"/>
</dbReference>
<dbReference type="PRINTS" id="PR00100">
    <property type="entry name" value="AOTCASE"/>
</dbReference>
<dbReference type="PRINTS" id="PR00101">
    <property type="entry name" value="ATCASE"/>
</dbReference>
<dbReference type="SUPFAM" id="SSF53671">
    <property type="entry name" value="Aspartate/ornithine carbamoyltransferase"/>
    <property type="match status" value="1"/>
</dbReference>
<dbReference type="PROSITE" id="PS00097">
    <property type="entry name" value="CARBAMOYLTRANSFERASE"/>
    <property type="match status" value="1"/>
</dbReference>
<organism>
    <name type="scientific">Escherichia coli (strain SMS-3-5 / SECEC)</name>
    <dbReference type="NCBI Taxonomy" id="439855"/>
    <lineage>
        <taxon>Bacteria</taxon>
        <taxon>Pseudomonadati</taxon>
        <taxon>Pseudomonadota</taxon>
        <taxon>Gammaproteobacteria</taxon>
        <taxon>Enterobacterales</taxon>
        <taxon>Enterobacteriaceae</taxon>
        <taxon>Escherichia</taxon>
    </lineage>
</organism>